<organism>
    <name type="scientific">Fusarium oxysporum</name>
    <name type="common">Fusarium vascular wilt</name>
    <dbReference type="NCBI Taxonomy" id="5507"/>
    <lineage>
        <taxon>Eukaryota</taxon>
        <taxon>Fungi</taxon>
        <taxon>Dikarya</taxon>
        <taxon>Ascomycota</taxon>
        <taxon>Pezizomycotina</taxon>
        <taxon>Sordariomycetes</taxon>
        <taxon>Hypocreomycetidae</taxon>
        <taxon>Hypocreales</taxon>
        <taxon>Nectriaceae</taxon>
        <taxon>Fusarium</taxon>
        <taxon>Fusarium oxysporum species complex</taxon>
    </lineage>
</organism>
<protein>
    <recommendedName>
        <fullName>Putative exoglucanase type C</fullName>
        <ecNumber>3.2.1.91</ecNumber>
    </recommendedName>
    <alternativeName>
        <fullName>1,4-beta-cellobiohydrolase</fullName>
    </alternativeName>
    <alternativeName>
        <fullName>Beta-glucancellobiohydrolase</fullName>
    </alternativeName>
    <alternativeName>
        <fullName>Exocellobiohydrolase I</fullName>
    </alternativeName>
</protein>
<keyword id="KW-0119">Carbohydrate metabolism</keyword>
<keyword id="KW-0136">Cellulose degradation</keyword>
<keyword id="KW-1015">Disulfide bond</keyword>
<keyword id="KW-0325">Glycoprotein</keyword>
<keyword id="KW-0326">Glycosidase</keyword>
<keyword id="KW-0378">Hydrolase</keyword>
<keyword id="KW-0624">Polysaccharide degradation</keyword>
<keyword id="KW-0732">Signal</keyword>
<reference key="1">
    <citation type="journal article" date="1994" name="Gene">
        <title>The use of conserved cellulase family-specific sequences to clone cellulase homologue cDNAs from Fusarium oxysporum.</title>
        <authorList>
            <person name="Sheppard P.O."/>
            <person name="Grant F.J."/>
            <person name="Oort P.J."/>
            <person name="Sprecher C.A."/>
            <person name="Foster D.C."/>
            <person name="Hagen F.S."/>
            <person name="Upshall A."/>
            <person name="McKnight G.L."/>
            <person name="O'Hara P.J."/>
        </authorList>
    </citation>
    <scope>NUCLEOTIDE SEQUENCE [MRNA]</scope>
</reference>
<name>GUXC_FUSOX</name>
<feature type="signal peptide" evidence="2">
    <location>
        <begin position="1"/>
        <end position="17"/>
    </location>
</feature>
<feature type="chain" id="PRO_0000007913" description="Putative exoglucanase type C">
    <location>
        <begin position="18"/>
        <end position="514"/>
    </location>
</feature>
<feature type="domain" description="CBM1" evidence="3">
    <location>
        <begin position="478"/>
        <end position="514"/>
    </location>
</feature>
<feature type="region of interest" description="Catalytic">
    <location>
        <begin position="18"/>
        <end position="439"/>
    </location>
</feature>
<feature type="region of interest" description="Disordered" evidence="4">
    <location>
        <begin position="408"/>
        <end position="433"/>
    </location>
</feature>
<feature type="region of interest" description="Linker">
    <location>
        <begin position="440"/>
        <end position="482"/>
    </location>
</feature>
<feature type="region of interest" description="Disordered" evidence="4">
    <location>
        <begin position="448"/>
        <end position="485"/>
    </location>
</feature>
<feature type="compositionally biased region" description="Polar residues" evidence="4">
    <location>
        <begin position="408"/>
        <end position="424"/>
    </location>
</feature>
<feature type="compositionally biased region" description="Low complexity" evidence="4">
    <location>
        <begin position="462"/>
        <end position="479"/>
    </location>
</feature>
<feature type="active site" description="Nucleophile" evidence="1">
    <location>
        <position position="229"/>
    </location>
</feature>
<feature type="active site" description="Proton donor" evidence="1">
    <location>
        <position position="234"/>
    </location>
</feature>
<feature type="glycosylation site" description="N-linked (GlcNAc...) asparagine" evidence="2">
    <location>
        <position position="287"/>
    </location>
</feature>
<feature type="glycosylation site" description="N-linked (GlcNAc...) asparagine" evidence="2">
    <location>
        <position position="490"/>
    </location>
</feature>
<feature type="disulfide bond" evidence="1">
    <location>
        <begin position="486"/>
        <end position="503"/>
    </location>
</feature>
<feature type="disulfide bond" evidence="1">
    <location>
        <begin position="497"/>
        <end position="513"/>
    </location>
</feature>
<evidence type="ECO:0000250" key="1"/>
<evidence type="ECO:0000255" key="2"/>
<evidence type="ECO:0000255" key="3">
    <source>
        <dbReference type="PROSITE-ProRule" id="PRU00597"/>
    </source>
</evidence>
<evidence type="ECO:0000256" key="4">
    <source>
        <dbReference type="SAM" id="MobiDB-lite"/>
    </source>
</evidence>
<evidence type="ECO:0000305" key="5"/>
<dbReference type="EC" id="3.2.1.91"/>
<dbReference type="EMBL" id="L29379">
    <property type="protein sequence ID" value="AAA65587.1"/>
    <property type="molecule type" value="mRNA"/>
</dbReference>
<dbReference type="SMR" id="P46238"/>
<dbReference type="CAZy" id="CBM1">
    <property type="family name" value="Carbohydrate-Binding Module Family 1"/>
</dbReference>
<dbReference type="CAZy" id="GH7">
    <property type="family name" value="Glycoside Hydrolase Family 7"/>
</dbReference>
<dbReference type="VEuPathDB" id="FungiDB:FOC1_g10015774"/>
<dbReference type="VEuPathDB" id="FungiDB:FOC4_g10015049"/>
<dbReference type="VEuPathDB" id="FungiDB:FOIG_00987"/>
<dbReference type="VEuPathDB" id="FungiDB:FOMG_01181"/>
<dbReference type="VEuPathDB" id="FungiDB:FOXG_00480"/>
<dbReference type="VEuPathDB" id="FungiDB:FOZG_01175"/>
<dbReference type="VEuPathDB" id="FungiDB:HZS61_000873"/>
<dbReference type="GO" id="GO:0005576">
    <property type="term" value="C:extracellular region"/>
    <property type="evidence" value="ECO:0007669"/>
    <property type="project" value="InterPro"/>
</dbReference>
<dbReference type="GO" id="GO:0016162">
    <property type="term" value="F:cellulose 1,4-beta-cellobiosidase activity"/>
    <property type="evidence" value="ECO:0007669"/>
    <property type="project" value="UniProtKB-EC"/>
</dbReference>
<dbReference type="GO" id="GO:0030248">
    <property type="term" value="F:cellulose binding"/>
    <property type="evidence" value="ECO:0007669"/>
    <property type="project" value="InterPro"/>
</dbReference>
<dbReference type="GO" id="GO:0030245">
    <property type="term" value="P:cellulose catabolic process"/>
    <property type="evidence" value="ECO:0007669"/>
    <property type="project" value="UniProtKB-KW"/>
</dbReference>
<dbReference type="CDD" id="cd07999">
    <property type="entry name" value="GH7_CBH_EG"/>
    <property type="match status" value="1"/>
</dbReference>
<dbReference type="FunFam" id="2.70.100.10:FF:000001">
    <property type="entry name" value="Glucanase"/>
    <property type="match status" value="1"/>
</dbReference>
<dbReference type="Gene3D" id="2.70.100.10">
    <property type="entry name" value="Glycoside hydrolase, family 7, domain"/>
    <property type="match status" value="1"/>
</dbReference>
<dbReference type="InterPro" id="IPR035971">
    <property type="entry name" value="CBD_sf"/>
</dbReference>
<dbReference type="InterPro" id="IPR000254">
    <property type="entry name" value="Cellulose-bd_dom_fun"/>
</dbReference>
<dbReference type="InterPro" id="IPR013320">
    <property type="entry name" value="ConA-like_dom_sf"/>
</dbReference>
<dbReference type="InterPro" id="IPR001722">
    <property type="entry name" value="Glyco_hydro_7"/>
</dbReference>
<dbReference type="InterPro" id="IPR037019">
    <property type="entry name" value="Glyco_hydro_7_sf"/>
</dbReference>
<dbReference type="PANTHER" id="PTHR33753">
    <property type="entry name" value="1,4-BETA-D-GLUCAN CELLOBIOHYDROLASE B"/>
    <property type="match status" value="1"/>
</dbReference>
<dbReference type="PANTHER" id="PTHR33753:SF2">
    <property type="entry name" value="GLYCOSIDE HYDROLASE FAMILY 7 PROTEIN"/>
    <property type="match status" value="1"/>
</dbReference>
<dbReference type="Pfam" id="PF00734">
    <property type="entry name" value="CBM_1"/>
    <property type="match status" value="1"/>
</dbReference>
<dbReference type="Pfam" id="PF00840">
    <property type="entry name" value="Glyco_hydro_7"/>
    <property type="match status" value="1"/>
</dbReference>
<dbReference type="PRINTS" id="PR00734">
    <property type="entry name" value="GLHYDRLASE7"/>
</dbReference>
<dbReference type="SMART" id="SM00236">
    <property type="entry name" value="fCBD"/>
    <property type="match status" value="1"/>
</dbReference>
<dbReference type="SUPFAM" id="SSF57180">
    <property type="entry name" value="Cellulose-binding domain"/>
    <property type="match status" value="1"/>
</dbReference>
<dbReference type="SUPFAM" id="SSF49899">
    <property type="entry name" value="Concanavalin A-like lectins/glucanases"/>
    <property type="match status" value="1"/>
</dbReference>
<dbReference type="PROSITE" id="PS00562">
    <property type="entry name" value="CBM1_1"/>
    <property type="match status" value="1"/>
</dbReference>
<dbReference type="PROSITE" id="PS51164">
    <property type="entry name" value="CBM1_2"/>
    <property type="match status" value="1"/>
</dbReference>
<sequence length="514" mass="54704">MYRIVATASALIAAARAQQVCSLNTETKPALTWSKCTSSGCSDVKGSVVIDANWRWTHQTSGSTNCYTGNKWDTSICTDGKTCAEKCCLDGADYSGTYGITSSGNQLSLGFVTNGPYSKNIGSRTYLMENENTYQMFQLLGNEFTFDVDVSGIGCGLNGAPHFVSMDEDGGKAKYSGNKAGAKYGTGYCDAQCPRDVKFINGVANSEGWKPSDSDVNAGVGNLGTCCPEMDIWEANSISTAFTPHPCTKLTQHSCTGDSCGGTYSSDRYGGTCDADGCDFNAYRQGNKTFYGPGSNFNIDTTKKMTVVTQFHKGSNGRLSEITRLYVQNGKVIANSESKIAGNPGSSLTSDFCSKQKSVFGDIDDFSKKGGWNGMSDALSAPMVLVMSLWHDHHSNMLWLDSTYPTDSTKVGSQRGSCATTSGKPSDLERDVPNSKVSFSNIKFGPIGSTYKSDGTTPNPPASSSTTGSSTPTNPPAGSVDQWGQCGGQNYSGPTTCKSPFTCKKINDFYSQCQ</sequence>
<comment type="catalytic activity">
    <reaction>
        <text>Hydrolysis of (1-&gt;4)-beta-D-glucosidic linkages in cellulose and cellotetraose, releasing cellobiose from the non-reducing ends of the chains.</text>
        <dbReference type="EC" id="3.2.1.91"/>
    </reaction>
</comment>
<comment type="similarity">
    <text evidence="5">Belongs to the glycosyl hydrolase 7 (cellulase C) family.</text>
</comment>
<accession>P46238</accession>
<proteinExistence type="evidence at transcript level"/>